<proteinExistence type="inferred from homology"/>
<protein>
    <recommendedName>
        <fullName evidence="1">Ferrochelatase</fullName>
        <ecNumber evidence="1">4.98.1.1</ecNumber>
    </recommendedName>
    <alternativeName>
        <fullName evidence="1">Heme synthase</fullName>
    </alternativeName>
    <alternativeName>
        <fullName evidence="1">Protoheme ferro-lyase</fullName>
    </alternativeName>
</protein>
<feature type="chain" id="PRO_1000019336" description="Ferrochelatase">
    <location>
        <begin position="1"/>
        <end position="391"/>
    </location>
</feature>
<feature type="binding site" evidence="1">
    <location>
        <position position="196"/>
    </location>
    <ligand>
        <name>Fe cation</name>
        <dbReference type="ChEBI" id="CHEBI:24875"/>
    </ligand>
</feature>
<feature type="binding site" evidence="1">
    <location>
        <position position="281"/>
    </location>
    <ligand>
        <name>Fe cation</name>
        <dbReference type="ChEBI" id="CHEBI:24875"/>
    </ligand>
</feature>
<evidence type="ECO:0000255" key="1">
    <source>
        <dbReference type="HAMAP-Rule" id="MF_00323"/>
    </source>
</evidence>
<name>HEMH_PROM1</name>
<comment type="function">
    <text evidence="1">Catalyzes the ferrous insertion into protoporphyrin IX.</text>
</comment>
<comment type="catalytic activity">
    <reaction evidence="1">
        <text>heme b + 2 H(+) = protoporphyrin IX + Fe(2+)</text>
        <dbReference type="Rhea" id="RHEA:22584"/>
        <dbReference type="ChEBI" id="CHEBI:15378"/>
        <dbReference type="ChEBI" id="CHEBI:29033"/>
        <dbReference type="ChEBI" id="CHEBI:57306"/>
        <dbReference type="ChEBI" id="CHEBI:60344"/>
        <dbReference type="EC" id="4.98.1.1"/>
    </reaction>
</comment>
<comment type="pathway">
    <text evidence="1">Porphyrin-containing compound metabolism; protoheme biosynthesis; protoheme from protoporphyrin-IX: step 1/1.</text>
</comment>
<comment type="subcellular location">
    <subcellularLocation>
        <location evidence="1">Cytoplasm</location>
    </subcellularLocation>
</comment>
<comment type="similarity">
    <text evidence="1">Belongs to the ferrochelatase family.</text>
</comment>
<keyword id="KW-0963">Cytoplasm</keyword>
<keyword id="KW-0350">Heme biosynthesis</keyword>
<keyword id="KW-0408">Iron</keyword>
<keyword id="KW-0456">Lyase</keyword>
<keyword id="KW-0479">Metal-binding</keyword>
<keyword id="KW-0627">Porphyrin biosynthesis</keyword>
<accession>A2C0Y4</accession>
<organism>
    <name type="scientific">Prochlorococcus marinus (strain NATL1A)</name>
    <dbReference type="NCBI Taxonomy" id="167555"/>
    <lineage>
        <taxon>Bacteria</taxon>
        <taxon>Bacillati</taxon>
        <taxon>Cyanobacteriota</taxon>
        <taxon>Cyanophyceae</taxon>
        <taxon>Synechococcales</taxon>
        <taxon>Prochlorococcaceae</taxon>
        <taxon>Prochlorococcus</taxon>
    </lineage>
</organism>
<dbReference type="EC" id="4.98.1.1" evidence="1"/>
<dbReference type="EMBL" id="CP000553">
    <property type="protein sequence ID" value="ABM75144.1"/>
    <property type="molecule type" value="Genomic_DNA"/>
</dbReference>
<dbReference type="RefSeq" id="WP_011823318.1">
    <property type="nucleotide sequence ID" value="NC_008819.1"/>
</dbReference>
<dbReference type="SMR" id="A2C0Y4"/>
<dbReference type="KEGG" id="pme:NATL1_05821"/>
<dbReference type="eggNOG" id="COG0276">
    <property type="taxonomic scope" value="Bacteria"/>
</dbReference>
<dbReference type="HOGENOM" id="CLU_018884_4_3_3"/>
<dbReference type="UniPathway" id="UPA00252">
    <property type="reaction ID" value="UER00325"/>
</dbReference>
<dbReference type="Proteomes" id="UP000002592">
    <property type="component" value="Chromosome"/>
</dbReference>
<dbReference type="GO" id="GO:0005737">
    <property type="term" value="C:cytoplasm"/>
    <property type="evidence" value="ECO:0007669"/>
    <property type="project" value="UniProtKB-SubCell"/>
</dbReference>
<dbReference type="GO" id="GO:0004325">
    <property type="term" value="F:ferrochelatase activity"/>
    <property type="evidence" value="ECO:0007669"/>
    <property type="project" value="UniProtKB-UniRule"/>
</dbReference>
<dbReference type="GO" id="GO:0046872">
    <property type="term" value="F:metal ion binding"/>
    <property type="evidence" value="ECO:0007669"/>
    <property type="project" value="UniProtKB-KW"/>
</dbReference>
<dbReference type="GO" id="GO:0006783">
    <property type="term" value="P:heme biosynthetic process"/>
    <property type="evidence" value="ECO:0007669"/>
    <property type="project" value="UniProtKB-UniRule"/>
</dbReference>
<dbReference type="CDD" id="cd00419">
    <property type="entry name" value="Ferrochelatase_C"/>
    <property type="match status" value="1"/>
</dbReference>
<dbReference type="CDD" id="cd03411">
    <property type="entry name" value="Ferrochelatase_N"/>
    <property type="match status" value="1"/>
</dbReference>
<dbReference type="FunFam" id="3.40.50.1400:FF:000006">
    <property type="entry name" value="Ferrochelatase"/>
    <property type="match status" value="1"/>
</dbReference>
<dbReference type="Gene3D" id="3.40.50.1400">
    <property type="match status" value="2"/>
</dbReference>
<dbReference type="HAMAP" id="MF_00323">
    <property type="entry name" value="Ferrochelatase"/>
    <property type="match status" value="1"/>
</dbReference>
<dbReference type="InterPro" id="IPR001015">
    <property type="entry name" value="Ferrochelatase"/>
</dbReference>
<dbReference type="InterPro" id="IPR019772">
    <property type="entry name" value="Ferrochelatase_AS"/>
</dbReference>
<dbReference type="InterPro" id="IPR033644">
    <property type="entry name" value="Ferrochelatase_C"/>
</dbReference>
<dbReference type="InterPro" id="IPR033659">
    <property type="entry name" value="Ferrochelatase_N"/>
</dbReference>
<dbReference type="NCBIfam" id="TIGR00109">
    <property type="entry name" value="hemH"/>
    <property type="match status" value="1"/>
</dbReference>
<dbReference type="PANTHER" id="PTHR11108">
    <property type="entry name" value="FERROCHELATASE"/>
    <property type="match status" value="1"/>
</dbReference>
<dbReference type="PANTHER" id="PTHR11108:SF1">
    <property type="entry name" value="FERROCHELATASE, MITOCHONDRIAL"/>
    <property type="match status" value="1"/>
</dbReference>
<dbReference type="Pfam" id="PF00762">
    <property type="entry name" value="Ferrochelatase"/>
    <property type="match status" value="1"/>
</dbReference>
<dbReference type="SUPFAM" id="SSF53800">
    <property type="entry name" value="Chelatase"/>
    <property type="match status" value="1"/>
</dbReference>
<dbReference type="SUPFAM" id="SSF103511">
    <property type="entry name" value="Chlorophyll a-b binding protein"/>
    <property type="match status" value="1"/>
</dbReference>
<dbReference type="PROSITE" id="PS00534">
    <property type="entry name" value="FERROCHELATASE"/>
    <property type="match status" value="1"/>
</dbReference>
<reference key="1">
    <citation type="journal article" date="2007" name="PLoS Genet.">
        <title>Patterns and implications of gene gain and loss in the evolution of Prochlorococcus.</title>
        <authorList>
            <person name="Kettler G.C."/>
            <person name="Martiny A.C."/>
            <person name="Huang K."/>
            <person name="Zucker J."/>
            <person name="Coleman M.L."/>
            <person name="Rodrigue S."/>
            <person name="Chen F."/>
            <person name="Lapidus A."/>
            <person name="Ferriera S."/>
            <person name="Johnson J."/>
            <person name="Steglich C."/>
            <person name="Church G.M."/>
            <person name="Richardson P."/>
            <person name="Chisholm S.W."/>
        </authorList>
    </citation>
    <scope>NUCLEOTIDE SEQUENCE [LARGE SCALE GENOMIC DNA]</scope>
    <source>
        <strain>NATL1A</strain>
    </source>
</reference>
<sequence>MARVGVLLLNLGGPERIKDVGPFLYNLFSDPEIIRLPVRAFQKPLAWLISLLRSSKSQEAYRSIGGGSPLRRITEQQARELQSYLRNIGIDATTYVAMRYWHPFTESAVADMKADGVSEVVVLPLYPHFSISTSGSSFRELKRLKDSDDEFAELSIRCIRSWFDHPAYVSSMAELIKKQILACDLPQESHVFFTAHGVPKSYVEEAGDPYQDQIQNCSLLIIDQLENSLGFTNSFSLAYQSRVGPEEWLKPYTEEVLEKLGKSGVKELVVVPISFVSEHIETLQEIDIEYKEIAQKNGIVNFKRVPALDIYPLFIEGLADLVSSCLNGEGISLEEASKLPERVKLYPQEKWQWGWNNSSEVWNGRVAMIVFLCFLMELIIGGGPLHQIGLL</sequence>
<gene>
    <name evidence="1" type="primary">hemH</name>
    <name type="ordered locus">NATL1_05821</name>
</gene>